<accession>Q49Y09</accession>
<comment type="function">
    <text evidence="1">Involved in DNA repair and RecF pathway recombination.</text>
</comment>
<comment type="similarity">
    <text evidence="1">Belongs to the RecO family.</text>
</comment>
<gene>
    <name evidence="1" type="primary">recO</name>
    <name type="ordered locus">SSP1190</name>
</gene>
<sequence>MLIKQKGIIIKTIDYGESDKIITILNEYGAKVPLMVRRAKKSKSGLQANTQLFVYGLFIYSKWKGMGTLSSVDVIDQNYHLRLDIYESSYASLCTETIDRSMETDGISKNSYELLHFVLDKIRQGISAQLMSVVVLLKCMTKFGFNAVFDRCVITQSEDQSKLVGYSFKYDGAISENVAYKDTHAFQLSNKTLYLLDILQKLPINQMSSLSIHETIVDEMSELVILLYKEYAGMYFKSQKLINQLYRLDNL</sequence>
<proteinExistence type="inferred from homology"/>
<evidence type="ECO:0000255" key="1">
    <source>
        <dbReference type="HAMAP-Rule" id="MF_00201"/>
    </source>
</evidence>
<keyword id="KW-0227">DNA damage</keyword>
<keyword id="KW-0233">DNA recombination</keyword>
<keyword id="KW-0234">DNA repair</keyword>
<keyword id="KW-1185">Reference proteome</keyword>
<reference key="1">
    <citation type="journal article" date="2005" name="Proc. Natl. Acad. Sci. U.S.A.">
        <title>Whole genome sequence of Staphylococcus saprophyticus reveals the pathogenesis of uncomplicated urinary tract infection.</title>
        <authorList>
            <person name="Kuroda M."/>
            <person name="Yamashita A."/>
            <person name="Hirakawa H."/>
            <person name="Kumano M."/>
            <person name="Morikawa K."/>
            <person name="Higashide M."/>
            <person name="Maruyama A."/>
            <person name="Inose Y."/>
            <person name="Matoba K."/>
            <person name="Toh H."/>
            <person name="Kuhara S."/>
            <person name="Hattori M."/>
            <person name="Ohta T."/>
        </authorList>
    </citation>
    <scope>NUCLEOTIDE SEQUENCE [LARGE SCALE GENOMIC DNA]</scope>
    <source>
        <strain>ATCC 15305 / DSM 20229 / NCIMB 8711 / NCTC 7292 / S-41</strain>
    </source>
</reference>
<feature type="chain" id="PRO_0000227056" description="DNA repair protein RecO">
    <location>
        <begin position="1"/>
        <end position="251"/>
    </location>
</feature>
<name>RECO_STAS1</name>
<organism>
    <name type="scientific">Staphylococcus saprophyticus subsp. saprophyticus (strain ATCC 15305 / DSM 20229 / NCIMB 8711 / NCTC 7292 / S-41)</name>
    <dbReference type="NCBI Taxonomy" id="342451"/>
    <lineage>
        <taxon>Bacteria</taxon>
        <taxon>Bacillati</taxon>
        <taxon>Bacillota</taxon>
        <taxon>Bacilli</taxon>
        <taxon>Bacillales</taxon>
        <taxon>Staphylococcaceae</taxon>
        <taxon>Staphylococcus</taxon>
    </lineage>
</organism>
<dbReference type="EMBL" id="AP008934">
    <property type="protein sequence ID" value="BAE18335.1"/>
    <property type="molecule type" value="Genomic_DNA"/>
</dbReference>
<dbReference type="RefSeq" id="WP_011303003.1">
    <property type="nucleotide sequence ID" value="NZ_MTGA01000038.1"/>
</dbReference>
<dbReference type="SMR" id="Q49Y09"/>
<dbReference type="GeneID" id="3616937"/>
<dbReference type="KEGG" id="ssp:SSP1190"/>
<dbReference type="PATRIC" id="fig|342451.11.peg.1188"/>
<dbReference type="eggNOG" id="COG1381">
    <property type="taxonomic scope" value="Bacteria"/>
</dbReference>
<dbReference type="HOGENOM" id="CLU_066632_4_0_9"/>
<dbReference type="OrthoDB" id="9797083at2"/>
<dbReference type="Proteomes" id="UP000006371">
    <property type="component" value="Chromosome"/>
</dbReference>
<dbReference type="GO" id="GO:0043590">
    <property type="term" value="C:bacterial nucleoid"/>
    <property type="evidence" value="ECO:0007669"/>
    <property type="project" value="TreeGrafter"/>
</dbReference>
<dbReference type="GO" id="GO:0006310">
    <property type="term" value="P:DNA recombination"/>
    <property type="evidence" value="ECO:0007669"/>
    <property type="project" value="UniProtKB-UniRule"/>
</dbReference>
<dbReference type="GO" id="GO:0006302">
    <property type="term" value="P:double-strand break repair"/>
    <property type="evidence" value="ECO:0007669"/>
    <property type="project" value="TreeGrafter"/>
</dbReference>
<dbReference type="Gene3D" id="2.40.50.140">
    <property type="entry name" value="Nucleic acid-binding proteins"/>
    <property type="match status" value="1"/>
</dbReference>
<dbReference type="HAMAP" id="MF_00201">
    <property type="entry name" value="RecO"/>
    <property type="match status" value="1"/>
</dbReference>
<dbReference type="InterPro" id="IPR037278">
    <property type="entry name" value="ARFGAP/RecO"/>
</dbReference>
<dbReference type="InterPro" id="IPR022572">
    <property type="entry name" value="DNA_rep/recomb_RecO_N"/>
</dbReference>
<dbReference type="InterPro" id="IPR012340">
    <property type="entry name" value="NA-bd_OB-fold"/>
</dbReference>
<dbReference type="InterPro" id="IPR003717">
    <property type="entry name" value="RecO"/>
</dbReference>
<dbReference type="NCBIfam" id="TIGR00613">
    <property type="entry name" value="reco"/>
    <property type="match status" value="1"/>
</dbReference>
<dbReference type="PANTHER" id="PTHR33991">
    <property type="entry name" value="DNA REPAIR PROTEIN RECO"/>
    <property type="match status" value="1"/>
</dbReference>
<dbReference type="PANTHER" id="PTHR33991:SF1">
    <property type="entry name" value="DNA REPAIR PROTEIN RECO"/>
    <property type="match status" value="1"/>
</dbReference>
<dbReference type="Pfam" id="PF02565">
    <property type="entry name" value="RecO_C"/>
    <property type="match status" value="1"/>
</dbReference>
<dbReference type="Pfam" id="PF11967">
    <property type="entry name" value="RecO_N"/>
    <property type="match status" value="1"/>
</dbReference>
<dbReference type="SUPFAM" id="SSF57863">
    <property type="entry name" value="ArfGap/RecO-like zinc finger"/>
    <property type="match status" value="1"/>
</dbReference>
<dbReference type="SUPFAM" id="SSF50249">
    <property type="entry name" value="Nucleic acid-binding proteins"/>
    <property type="match status" value="1"/>
</dbReference>
<protein>
    <recommendedName>
        <fullName evidence="1">DNA repair protein RecO</fullName>
    </recommendedName>
    <alternativeName>
        <fullName evidence="1">Recombination protein O</fullName>
    </alternativeName>
</protein>